<name>CT10C_CONAO</name>
<sequence length="11" mass="1266">ACCVYKICYPC</sequence>
<protein>
    <recommendedName>
        <fullName evidence="3">Conotoxin ar5c</fullName>
    </recommendedName>
</protein>
<comment type="subcellular location">
    <subcellularLocation>
        <location evidence="2">Secreted</location>
    </subcellularLocation>
</comment>
<comment type="tissue specificity">
    <text evidence="5">Expressed by the venom duct.</text>
</comment>
<comment type="domain">
    <text evidence="3">The cysteine framework is X (CC-C-C).</text>
</comment>
<comment type="mass spectrometry" mass="1260.6" method="MALDI" evidence="2"/>
<comment type="similarity">
    <text evidence="4">Belongs to the conotoxin T superfamily.</text>
</comment>
<accession>C0HKY4</accession>
<reference evidence="4" key="1">
    <citation type="journal article" date="2015" name="Toxicon">
        <title>A sleep-inducing peptide from the venom of the Indian cone snail Conus araneosus.</title>
        <authorList>
            <person name="Franklin J.B."/>
            <person name="Rajesh R.P."/>
        </authorList>
    </citation>
    <scope>PROTEIN SEQUENCE</scope>
    <scope>SUBCELLULAR LOCATION</scope>
    <scope>MASS SPECTROMETRY</scope>
    <scope>IDENTIFICATION BY MASS SPECTROMETRY</scope>
    <source>
        <tissue evidence="3">Venom</tissue>
    </source>
</reference>
<feature type="peptide" id="PRO_0000441660" description="Conotoxin ar5c" evidence="2">
    <location>
        <begin position="1"/>
        <end position="11"/>
    </location>
</feature>
<feature type="disulfide bond" evidence="1">
    <location>
        <begin position="2"/>
        <end position="11"/>
    </location>
</feature>
<feature type="disulfide bond" evidence="1">
    <location>
        <begin position="3"/>
        <end position="8"/>
    </location>
</feature>
<feature type="unsure residue" description="I or L" evidence="3">
    <location>
        <position position="7"/>
    </location>
</feature>
<evidence type="ECO:0000250" key="1">
    <source>
        <dbReference type="UniProtKB" id="P0CI23"/>
    </source>
</evidence>
<evidence type="ECO:0000269" key="2">
    <source>
    </source>
</evidence>
<evidence type="ECO:0000303" key="3">
    <source>
    </source>
</evidence>
<evidence type="ECO:0000305" key="4"/>
<evidence type="ECO:0000305" key="5">
    <source>
    </source>
</evidence>
<organism evidence="3">
    <name type="scientific">Conus araneosus</name>
    <name type="common">Cobweb cone</name>
    <dbReference type="NCBI Taxonomy" id="101286"/>
    <lineage>
        <taxon>Eukaryota</taxon>
        <taxon>Metazoa</taxon>
        <taxon>Spiralia</taxon>
        <taxon>Lophotrochozoa</taxon>
        <taxon>Mollusca</taxon>
        <taxon>Gastropoda</taxon>
        <taxon>Caenogastropoda</taxon>
        <taxon>Neogastropoda</taxon>
        <taxon>Conoidea</taxon>
        <taxon>Conidae</taxon>
        <taxon>Conus</taxon>
    </lineage>
</organism>
<keyword id="KW-0903">Direct protein sequencing</keyword>
<keyword id="KW-1015">Disulfide bond</keyword>
<keyword id="KW-0964">Secreted</keyword>
<keyword id="KW-0800">Toxin</keyword>
<dbReference type="GO" id="GO:0005576">
    <property type="term" value="C:extracellular region"/>
    <property type="evidence" value="ECO:0000314"/>
    <property type="project" value="UniProtKB"/>
</dbReference>
<dbReference type="GO" id="GO:0090729">
    <property type="term" value="F:toxin activity"/>
    <property type="evidence" value="ECO:0007669"/>
    <property type="project" value="UniProtKB-KW"/>
</dbReference>
<proteinExistence type="evidence at protein level"/>